<organism>
    <name type="scientific">Leuconostoc citreum (strain KM20)</name>
    <dbReference type="NCBI Taxonomy" id="349519"/>
    <lineage>
        <taxon>Bacteria</taxon>
        <taxon>Bacillati</taxon>
        <taxon>Bacillota</taxon>
        <taxon>Bacilli</taxon>
        <taxon>Lactobacillales</taxon>
        <taxon>Lactobacillaceae</taxon>
        <taxon>Leuconostoc</taxon>
    </lineage>
</organism>
<protein>
    <recommendedName>
        <fullName evidence="1">Small ribosomal subunit protein uS7</fullName>
    </recommendedName>
    <alternativeName>
        <fullName evidence="2">30S ribosomal protein S7</fullName>
    </alternativeName>
</protein>
<reference key="1">
    <citation type="journal article" date="2008" name="J. Bacteriol.">
        <title>Complete genome sequence of Leuconostoc citreum KM20.</title>
        <authorList>
            <person name="Kim J.F."/>
            <person name="Jeong H."/>
            <person name="Lee J.-S."/>
            <person name="Choi S.-H."/>
            <person name="Ha M."/>
            <person name="Hur C.-G."/>
            <person name="Kim J.-S."/>
            <person name="Lee S."/>
            <person name="Park H.-S."/>
            <person name="Park Y.-H."/>
            <person name="Oh T.K."/>
        </authorList>
    </citation>
    <scope>NUCLEOTIDE SEQUENCE [LARGE SCALE GENOMIC DNA]</scope>
    <source>
        <strain>KM20</strain>
    </source>
</reference>
<accession>B1MW22</accession>
<feature type="chain" id="PRO_1000125965" description="Small ribosomal subunit protein uS7">
    <location>
        <begin position="1"/>
        <end position="156"/>
    </location>
</feature>
<keyword id="KW-1185">Reference proteome</keyword>
<keyword id="KW-0687">Ribonucleoprotein</keyword>
<keyword id="KW-0689">Ribosomal protein</keyword>
<keyword id="KW-0694">RNA-binding</keyword>
<keyword id="KW-0699">rRNA-binding</keyword>
<keyword id="KW-0820">tRNA-binding</keyword>
<proteinExistence type="inferred from homology"/>
<gene>
    <name evidence="1" type="primary">rpsG</name>
    <name type="ordered locus">LCK_01603</name>
</gene>
<name>RS7_LEUCK</name>
<comment type="function">
    <text evidence="1">One of the primary rRNA binding proteins, it binds directly to 16S rRNA where it nucleates assembly of the head domain of the 30S subunit. Is located at the subunit interface close to the decoding center, probably blocks exit of the E-site tRNA.</text>
</comment>
<comment type="subunit">
    <text evidence="1">Part of the 30S ribosomal subunit. Contacts proteins S9 and S11.</text>
</comment>
<comment type="similarity">
    <text evidence="1">Belongs to the universal ribosomal protein uS7 family.</text>
</comment>
<evidence type="ECO:0000255" key="1">
    <source>
        <dbReference type="HAMAP-Rule" id="MF_00480"/>
    </source>
</evidence>
<evidence type="ECO:0000305" key="2"/>
<dbReference type="EMBL" id="DQ489736">
    <property type="protein sequence ID" value="ACA83426.1"/>
    <property type="molecule type" value="Genomic_DNA"/>
</dbReference>
<dbReference type="RefSeq" id="WP_004899475.1">
    <property type="nucleotide sequence ID" value="NC_010471.1"/>
</dbReference>
<dbReference type="SMR" id="B1MW22"/>
<dbReference type="STRING" id="349519.LCK_01603"/>
<dbReference type="GeneID" id="97231452"/>
<dbReference type="KEGG" id="lci:LCK_01603"/>
<dbReference type="eggNOG" id="COG0049">
    <property type="taxonomic scope" value="Bacteria"/>
</dbReference>
<dbReference type="HOGENOM" id="CLU_072226_1_1_9"/>
<dbReference type="OrthoDB" id="9807653at2"/>
<dbReference type="Proteomes" id="UP000002166">
    <property type="component" value="Chromosome"/>
</dbReference>
<dbReference type="GO" id="GO:0015935">
    <property type="term" value="C:small ribosomal subunit"/>
    <property type="evidence" value="ECO:0007669"/>
    <property type="project" value="InterPro"/>
</dbReference>
<dbReference type="GO" id="GO:0019843">
    <property type="term" value="F:rRNA binding"/>
    <property type="evidence" value="ECO:0007669"/>
    <property type="project" value="UniProtKB-UniRule"/>
</dbReference>
<dbReference type="GO" id="GO:0003735">
    <property type="term" value="F:structural constituent of ribosome"/>
    <property type="evidence" value="ECO:0007669"/>
    <property type="project" value="InterPro"/>
</dbReference>
<dbReference type="GO" id="GO:0000049">
    <property type="term" value="F:tRNA binding"/>
    <property type="evidence" value="ECO:0007669"/>
    <property type="project" value="UniProtKB-UniRule"/>
</dbReference>
<dbReference type="GO" id="GO:0006412">
    <property type="term" value="P:translation"/>
    <property type="evidence" value="ECO:0007669"/>
    <property type="project" value="UniProtKB-UniRule"/>
</dbReference>
<dbReference type="CDD" id="cd14869">
    <property type="entry name" value="uS7_Bacteria"/>
    <property type="match status" value="1"/>
</dbReference>
<dbReference type="FunFam" id="1.10.455.10:FF:000001">
    <property type="entry name" value="30S ribosomal protein S7"/>
    <property type="match status" value="1"/>
</dbReference>
<dbReference type="Gene3D" id="1.10.455.10">
    <property type="entry name" value="Ribosomal protein S7 domain"/>
    <property type="match status" value="1"/>
</dbReference>
<dbReference type="HAMAP" id="MF_00480_B">
    <property type="entry name" value="Ribosomal_uS7_B"/>
    <property type="match status" value="1"/>
</dbReference>
<dbReference type="InterPro" id="IPR000235">
    <property type="entry name" value="Ribosomal_uS7"/>
</dbReference>
<dbReference type="InterPro" id="IPR005717">
    <property type="entry name" value="Ribosomal_uS7_bac/org-type"/>
</dbReference>
<dbReference type="InterPro" id="IPR020606">
    <property type="entry name" value="Ribosomal_uS7_CS"/>
</dbReference>
<dbReference type="InterPro" id="IPR023798">
    <property type="entry name" value="Ribosomal_uS7_dom"/>
</dbReference>
<dbReference type="InterPro" id="IPR036823">
    <property type="entry name" value="Ribosomal_uS7_dom_sf"/>
</dbReference>
<dbReference type="NCBIfam" id="TIGR01029">
    <property type="entry name" value="rpsG_bact"/>
    <property type="match status" value="1"/>
</dbReference>
<dbReference type="PANTHER" id="PTHR11205">
    <property type="entry name" value="RIBOSOMAL PROTEIN S7"/>
    <property type="match status" value="1"/>
</dbReference>
<dbReference type="Pfam" id="PF00177">
    <property type="entry name" value="Ribosomal_S7"/>
    <property type="match status" value="1"/>
</dbReference>
<dbReference type="PIRSF" id="PIRSF002122">
    <property type="entry name" value="RPS7p_RPS7a_RPS5e_RPS7o"/>
    <property type="match status" value="1"/>
</dbReference>
<dbReference type="SUPFAM" id="SSF47973">
    <property type="entry name" value="Ribosomal protein S7"/>
    <property type="match status" value="1"/>
</dbReference>
<dbReference type="PROSITE" id="PS00052">
    <property type="entry name" value="RIBOSOMAL_S7"/>
    <property type="match status" value="1"/>
</dbReference>
<sequence length="156" mass="18079">MPRKGYTKRQEVLPDPIYNSKLVSRLINKLMLDGKRGTASTILYDAFDRIKEATGNEPLEVFEQAMENIMPVLEVKARRVGGSNYQVPIEVRPDRRTTLGLRWLVNYSRLRNEHTMDERLAKEIMDAANDTGASVKKREDTHKMAEANRAFAHYRW</sequence>